<name>PA2A1_PSETE</name>
<comment type="function">
    <text evidence="5">Snake venom phospholipase A2 (PLA2) that shows moderate enzymatic activity and exhibits procoagulant activity. PLA2 catalyzes the calcium-dependent hydrolysis of the 2-acyl groups in 3-sn-phosphoglycerides.</text>
</comment>
<comment type="catalytic activity">
    <reaction evidence="3 4">
        <text>a 1,2-diacyl-sn-glycero-3-phosphocholine + H2O = a 1-acyl-sn-glycero-3-phosphocholine + a fatty acid + H(+)</text>
        <dbReference type="Rhea" id="RHEA:15801"/>
        <dbReference type="ChEBI" id="CHEBI:15377"/>
        <dbReference type="ChEBI" id="CHEBI:15378"/>
        <dbReference type="ChEBI" id="CHEBI:28868"/>
        <dbReference type="ChEBI" id="CHEBI:57643"/>
        <dbReference type="ChEBI" id="CHEBI:58168"/>
        <dbReference type="EC" id="3.1.1.4"/>
    </reaction>
</comment>
<comment type="cofactor">
    <cofactor evidence="1">
        <name>Ca(2+)</name>
        <dbReference type="ChEBI" id="CHEBI:29108"/>
    </cofactor>
    <text evidence="1">Binds 1 Ca(2+) ion.</text>
</comment>
<comment type="subunit">
    <text>Monomer.</text>
</comment>
<comment type="subcellular location">
    <subcellularLocation>
        <location evidence="1">Secreted</location>
    </subcellularLocation>
</comment>
<comment type="tissue specificity">
    <text>Expressed by the venom gland.</text>
</comment>
<comment type="similarity">
    <text evidence="6">Belongs to the phospholipase A2 family. Group I subfamily. D49 sub-subfamily.</text>
</comment>
<feature type="signal peptide" evidence="2">
    <location>
        <begin position="1"/>
        <end position="19"/>
    </location>
</feature>
<feature type="propeptide" id="PRO_0000022948" evidence="5">
    <location>
        <begin position="20"/>
        <end position="27"/>
    </location>
</feature>
<feature type="chain" id="PRO_0000022949" description="Acidic phospholipase A2 1">
    <location>
        <begin position="28"/>
        <end position="154"/>
    </location>
</feature>
<feature type="active site" evidence="1">
    <location>
        <position position="75"/>
    </location>
</feature>
<feature type="active site" evidence="1">
    <location>
        <position position="126"/>
    </location>
</feature>
<feature type="binding site" evidence="1">
    <location>
        <position position="55"/>
    </location>
    <ligand>
        <name>Ca(2+)</name>
        <dbReference type="ChEBI" id="CHEBI:29108"/>
    </ligand>
</feature>
<feature type="binding site" evidence="1">
    <location>
        <position position="57"/>
    </location>
    <ligand>
        <name>Ca(2+)</name>
        <dbReference type="ChEBI" id="CHEBI:29108"/>
    </ligand>
</feature>
<feature type="binding site" evidence="1">
    <location>
        <position position="59"/>
    </location>
    <ligand>
        <name>Ca(2+)</name>
        <dbReference type="ChEBI" id="CHEBI:29108"/>
    </ligand>
</feature>
<feature type="binding site" evidence="1">
    <location>
        <position position="76"/>
    </location>
    <ligand>
        <name>Ca(2+)</name>
        <dbReference type="ChEBI" id="CHEBI:29108"/>
    </ligand>
</feature>
<feature type="disulfide bond" evidence="1">
    <location>
        <begin position="38"/>
        <end position="104"/>
    </location>
</feature>
<feature type="disulfide bond" evidence="1">
    <location>
        <begin position="54"/>
        <end position="153"/>
    </location>
</feature>
<feature type="disulfide bond" evidence="1">
    <location>
        <begin position="56"/>
        <end position="72"/>
    </location>
</feature>
<feature type="disulfide bond" evidence="1">
    <location>
        <begin position="71"/>
        <end position="132"/>
    </location>
</feature>
<feature type="disulfide bond" evidence="1">
    <location>
        <begin position="78"/>
        <end position="125"/>
    </location>
</feature>
<feature type="disulfide bond" evidence="1">
    <location>
        <begin position="88"/>
        <end position="118"/>
    </location>
</feature>
<feature type="disulfide bond" evidence="1">
    <location>
        <begin position="111"/>
        <end position="123"/>
    </location>
</feature>
<dbReference type="EC" id="3.1.1.4"/>
<dbReference type="EMBL" id="AF082983">
    <property type="protein sequence ID" value="AAD40975.1"/>
    <property type="molecule type" value="mRNA"/>
</dbReference>
<dbReference type="EMBL" id="AY027494">
    <property type="protein sequence ID" value="AAK15775.1"/>
    <property type="molecule type" value="Genomic_DNA"/>
</dbReference>
<dbReference type="SMR" id="Q9W7J4"/>
<dbReference type="Proteomes" id="UP000472273">
    <property type="component" value="Unplaced"/>
</dbReference>
<dbReference type="GO" id="GO:0005576">
    <property type="term" value="C:extracellular region"/>
    <property type="evidence" value="ECO:0007669"/>
    <property type="project" value="UniProtKB-SubCell"/>
</dbReference>
<dbReference type="GO" id="GO:0005509">
    <property type="term" value="F:calcium ion binding"/>
    <property type="evidence" value="ECO:0007669"/>
    <property type="project" value="InterPro"/>
</dbReference>
<dbReference type="GO" id="GO:0047498">
    <property type="term" value="F:calcium-dependent phospholipase A2 activity"/>
    <property type="evidence" value="ECO:0007669"/>
    <property type="project" value="TreeGrafter"/>
</dbReference>
<dbReference type="GO" id="GO:0005543">
    <property type="term" value="F:phospholipid binding"/>
    <property type="evidence" value="ECO:0007669"/>
    <property type="project" value="TreeGrafter"/>
</dbReference>
<dbReference type="GO" id="GO:0005102">
    <property type="term" value="F:signaling receptor binding"/>
    <property type="evidence" value="ECO:0007669"/>
    <property type="project" value="TreeGrafter"/>
</dbReference>
<dbReference type="GO" id="GO:0090729">
    <property type="term" value="F:toxin activity"/>
    <property type="evidence" value="ECO:0007669"/>
    <property type="project" value="UniProtKB-KW"/>
</dbReference>
<dbReference type="GO" id="GO:0050482">
    <property type="term" value="P:arachidonate secretion"/>
    <property type="evidence" value="ECO:0007669"/>
    <property type="project" value="InterPro"/>
</dbReference>
<dbReference type="GO" id="GO:0006633">
    <property type="term" value="P:fatty acid biosynthetic process"/>
    <property type="evidence" value="ECO:0007669"/>
    <property type="project" value="TreeGrafter"/>
</dbReference>
<dbReference type="GO" id="GO:0016042">
    <property type="term" value="P:lipid catabolic process"/>
    <property type="evidence" value="ECO:0007669"/>
    <property type="project" value="UniProtKB-KW"/>
</dbReference>
<dbReference type="GO" id="GO:0006644">
    <property type="term" value="P:phospholipid metabolic process"/>
    <property type="evidence" value="ECO:0007669"/>
    <property type="project" value="InterPro"/>
</dbReference>
<dbReference type="GO" id="GO:0048146">
    <property type="term" value="P:positive regulation of fibroblast proliferation"/>
    <property type="evidence" value="ECO:0007669"/>
    <property type="project" value="TreeGrafter"/>
</dbReference>
<dbReference type="CDD" id="cd00125">
    <property type="entry name" value="PLA2c"/>
    <property type="match status" value="1"/>
</dbReference>
<dbReference type="FunFam" id="1.20.90.10:FF:000007">
    <property type="entry name" value="Acidic phospholipase A2"/>
    <property type="match status" value="1"/>
</dbReference>
<dbReference type="Gene3D" id="1.20.90.10">
    <property type="entry name" value="Phospholipase A2 domain"/>
    <property type="match status" value="1"/>
</dbReference>
<dbReference type="InterPro" id="IPR001211">
    <property type="entry name" value="PLipase_A2"/>
</dbReference>
<dbReference type="InterPro" id="IPR033112">
    <property type="entry name" value="PLipase_A2_Asp_AS"/>
</dbReference>
<dbReference type="InterPro" id="IPR016090">
    <property type="entry name" value="PLipase_A2_dom"/>
</dbReference>
<dbReference type="InterPro" id="IPR036444">
    <property type="entry name" value="PLipase_A2_dom_sf"/>
</dbReference>
<dbReference type="InterPro" id="IPR033113">
    <property type="entry name" value="PLipase_A2_His_AS"/>
</dbReference>
<dbReference type="PANTHER" id="PTHR11716:SF94">
    <property type="entry name" value="PHOSPHOLIPASE A2"/>
    <property type="match status" value="1"/>
</dbReference>
<dbReference type="PANTHER" id="PTHR11716">
    <property type="entry name" value="PHOSPHOLIPASE A2 FAMILY MEMBER"/>
    <property type="match status" value="1"/>
</dbReference>
<dbReference type="Pfam" id="PF00068">
    <property type="entry name" value="Phospholip_A2_1"/>
    <property type="match status" value="1"/>
</dbReference>
<dbReference type="PRINTS" id="PR00389">
    <property type="entry name" value="PHPHLIPASEA2"/>
</dbReference>
<dbReference type="SMART" id="SM00085">
    <property type="entry name" value="PA2c"/>
    <property type="match status" value="1"/>
</dbReference>
<dbReference type="SUPFAM" id="SSF48619">
    <property type="entry name" value="Phospholipase A2, PLA2"/>
    <property type="match status" value="1"/>
</dbReference>
<dbReference type="PROSITE" id="PS00119">
    <property type="entry name" value="PA2_ASP"/>
    <property type="match status" value="1"/>
</dbReference>
<dbReference type="PROSITE" id="PS00118">
    <property type="entry name" value="PA2_HIS"/>
    <property type="match status" value="1"/>
</dbReference>
<keyword id="KW-1204">Blood coagulation cascade activating toxin</keyword>
<keyword id="KW-0106">Calcium</keyword>
<keyword id="KW-0903">Direct protein sequencing</keyword>
<keyword id="KW-1015">Disulfide bond</keyword>
<keyword id="KW-1199">Hemostasis impairing toxin</keyword>
<keyword id="KW-0378">Hydrolase</keyword>
<keyword id="KW-0442">Lipid degradation</keyword>
<keyword id="KW-0443">Lipid metabolism</keyword>
<keyword id="KW-0479">Metal-binding</keyword>
<keyword id="KW-1185">Reference proteome</keyword>
<keyword id="KW-0964">Secreted</keyword>
<keyword id="KW-0732">Signal</keyword>
<keyword id="KW-0800">Toxin</keyword>
<evidence type="ECO:0000250" key="1"/>
<evidence type="ECO:0000255" key="2"/>
<evidence type="ECO:0000255" key="3">
    <source>
        <dbReference type="PROSITE-ProRule" id="PRU10035"/>
    </source>
</evidence>
<evidence type="ECO:0000255" key="4">
    <source>
        <dbReference type="PROSITE-ProRule" id="PRU10036"/>
    </source>
</evidence>
<evidence type="ECO:0000269" key="5">
    <source>
    </source>
</evidence>
<evidence type="ECO:0000305" key="6"/>
<protein>
    <recommendedName>
        <fullName>Acidic phospholipase A2 1</fullName>
        <shortName>svPLA2</shortName>
        <ecNumber>3.1.1.4</ecNumber>
    </recommendedName>
    <alternativeName>
        <fullName>Phosphatidylcholine 2-acylhydrolase</fullName>
    </alternativeName>
    <alternativeName>
        <fullName>Pt-PLA1</fullName>
    </alternativeName>
</protein>
<reference key="1">
    <citation type="journal article" date="2004" name="Arch. Biochem. Biophys.">
        <title>Group IB phospholipase A2 from Pseudonaja textilis.</title>
        <authorList>
            <person name="Armugam A."/>
            <person name="Gong N.L."/>
            <person name="Li X.J."/>
            <person name="Siew P.Y."/>
            <person name="Chai S.C."/>
            <person name="Nair R."/>
            <person name="Jeyaseelan K."/>
        </authorList>
    </citation>
    <scope>NUCLEOTIDE SEQUENCE [MRNA]</scope>
    <scope>PROTEIN SEQUENCE OF 28-39</scope>
    <scope>FUNCTION</scope>
    <source>
        <tissue>Venom</tissue>
        <tissue>Venom gland</tissue>
    </source>
</reference>
<reference key="2">
    <citation type="journal article" date="2006" name="Mol. Cell. Proteomics">
        <title>Molecular diversity in venom from the Australian Brown snake, Pseudonaja textilis.</title>
        <authorList>
            <person name="Birrell G.W."/>
            <person name="Earl S."/>
            <person name="Masci P.P."/>
            <person name="de Jersey J."/>
            <person name="Wallis T.P."/>
            <person name="Gorman J.J."/>
            <person name="Lavin M.F."/>
        </authorList>
    </citation>
    <scope>IDENTIFICATION BY MASS SPECTROMETRY</scope>
    <source>
        <tissue>Venom</tissue>
    </source>
</reference>
<organism>
    <name type="scientific">Pseudonaja textilis</name>
    <name type="common">Eastern brown snake</name>
    <dbReference type="NCBI Taxonomy" id="8673"/>
    <lineage>
        <taxon>Eukaryota</taxon>
        <taxon>Metazoa</taxon>
        <taxon>Chordata</taxon>
        <taxon>Craniata</taxon>
        <taxon>Vertebrata</taxon>
        <taxon>Euteleostomi</taxon>
        <taxon>Lepidosauria</taxon>
        <taxon>Squamata</taxon>
        <taxon>Bifurcata</taxon>
        <taxon>Unidentata</taxon>
        <taxon>Episquamata</taxon>
        <taxon>Toxicofera</taxon>
        <taxon>Serpentes</taxon>
        <taxon>Colubroidea</taxon>
        <taxon>Elapidae</taxon>
        <taxon>Hydrophiinae</taxon>
        <taxon>Pseudonaja</taxon>
    </lineage>
</organism>
<proteinExistence type="evidence at protein level"/>
<sequence length="154" mass="16844">MHPAHLLVLLGVCVSLLGAARIPPLPLSLDDFSNLITCANRGSRSWLDYAHYGCFCGSGGSGTPVDDLDRCCQVHDNCFGDAEKLPACNYLFSGPYWNPYSYKCNEGEITCTDDNDECAAFICNCDRTAAICFAGATYNDENFMVTIKKKNICQ</sequence>
<accession>Q9W7J4</accession>